<organism>
    <name type="scientific">Drosophila ananassae</name>
    <name type="common">Fruit fly</name>
    <dbReference type="NCBI Taxonomy" id="7217"/>
    <lineage>
        <taxon>Eukaryota</taxon>
        <taxon>Metazoa</taxon>
        <taxon>Ecdysozoa</taxon>
        <taxon>Arthropoda</taxon>
        <taxon>Hexapoda</taxon>
        <taxon>Insecta</taxon>
        <taxon>Pterygota</taxon>
        <taxon>Neoptera</taxon>
        <taxon>Endopterygota</taxon>
        <taxon>Diptera</taxon>
        <taxon>Brachycera</taxon>
        <taxon>Muscomorpha</taxon>
        <taxon>Ephydroidea</taxon>
        <taxon>Drosophilidae</taxon>
        <taxon>Drosophila</taxon>
        <taxon>Sophophora</taxon>
    </lineage>
</organism>
<evidence type="ECO:0000250" key="1"/>
<evidence type="ECO:0000250" key="2">
    <source>
        <dbReference type="UniProtKB" id="O76460"/>
    </source>
</evidence>
<evidence type="ECO:0000255" key="3"/>
<evidence type="ECO:0000255" key="4">
    <source>
        <dbReference type="PROSITE-ProRule" id="PRU00541"/>
    </source>
</evidence>
<evidence type="ECO:0000255" key="5">
    <source>
        <dbReference type="PROSITE-ProRule" id="PRU00542"/>
    </source>
</evidence>
<evidence type="ECO:0000256" key="6">
    <source>
        <dbReference type="SAM" id="MobiDB-lite"/>
    </source>
</evidence>
<evidence type="ECO:0000312" key="7">
    <source>
        <dbReference type="EMBL" id="EDV31865.1"/>
    </source>
</evidence>
<gene>
    <name evidence="2" type="primary">okr</name>
    <name type="ORF">GF14336</name>
</gene>
<reference evidence="7" key="1">
    <citation type="journal article" date="2007" name="Nature">
        <title>Evolution of genes and genomes on the Drosophila phylogeny.</title>
        <authorList>
            <consortium name="Drosophila 12 genomes consortium"/>
        </authorList>
    </citation>
    <scope>NUCLEOTIDE SEQUENCE [LARGE SCALE GENOMIC DNA]</scope>
    <source>
        <strain evidence="7">Tucson 14024-0371.13</strain>
    </source>
</reference>
<keyword id="KW-0067">ATP-binding</keyword>
<keyword id="KW-0131">Cell cycle</keyword>
<keyword id="KW-0132">Cell division</keyword>
<keyword id="KW-0227">DNA damage</keyword>
<keyword id="KW-0234">DNA repair</keyword>
<keyword id="KW-0238">DNA-binding</keyword>
<keyword id="KW-0347">Helicase</keyword>
<keyword id="KW-0378">Hydrolase</keyword>
<keyword id="KW-0469">Meiosis</keyword>
<keyword id="KW-0498">Mitosis</keyword>
<keyword id="KW-0547">Nucleotide-binding</keyword>
<keyword id="KW-0539">Nucleus</keyword>
<keyword id="KW-0597">Phosphoprotein</keyword>
<keyword id="KW-1185">Reference proteome</keyword>
<proteinExistence type="inferred from homology"/>
<name>RAD54_DROAN</name>
<protein>
    <recommendedName>
        <fullName evidence="2">DNA repair and recombination protein RAD54-like</fullName>
        <ecNumber>3.6.4.-</ecNumber>
    </recommendedName>
    <alternativeName>
        <fullName evidence="2">Protein okra</fullName>
    </alternativeName>
</protein>
<feature type="chain" id="PRO_0000392519" description="DNA repair and recombination protein RAD54-like">
    <location>
        <begin position="1"/>
        <end position="791"/>
    </location>
</feature>
<feature type="domain" description="Helicase ATP-binding" evidence="4">
    <location>
        <begin position="175"/>
        <end position="349"/>
    </location>
</feature>
<feature type="domain" description="Helicase C-terminal" evidence="5">
    <location>
        <begin position="506"/>
        <end position="663"/>
    </location>
</feature>
<feature type="region of interest" description="Disordered" evidence="6">
    <location>
        <begin position="1"/>
        <end position="53"/>
    </location>
</feature>
<feature type="region of interest" description="Required for chromatin remodeling, strand pairing activities and coupling of ATPase activity" evidence="2">
    <location>
        <begin position="2"/>
        <end position="9"/>
    </location>
</feature>
<feature type="region of interest" description="Disordered" evidence="6">
    <location>
        <begin position="747"/>
        <end position="791"/>
    </location>
</feature>
<feature type="short sequence motif" description="DEGH box" evidence="3">
    <location>
        <begin position="300"/>
        <end position="303"/>
    </location>
</feature>
<feature type="compositionally biased region" description="Polar residues" evidence="6">
    <location>
        <begin position="1"/>
        <end position="20"/>
    </location>
</feature>
<feature type="compositionally biased region" description="Basic and acidic residues" evidence="6">
    <location>
        <begin position="34"/>
        <end position="53"/>
    </location>
</feature>
<feature type="compositionally biased region" description="Acidic residues" evidence="6">
    <location>
        <begin position="782"/>
        <end position="791"/>
    </location>
</feature>
<feature type="binding site" evidence="4">
    <location>
        <begin position="188"/>
        <end position="195"/>
    </location>
    <ligand>
        <name>ATP</name>
        <dbReference type="ChEBI" id="CHEBI:30616"/>
    </ligand>
</feature>
<feature type="modified residue" description="Phosphothreonine" evidence="2">
    <location>
        <position position="22"/>
    </location>
</feature>
<accession>B3MMA5</accession>
<sequence>MRRSLAPSQRIGQSTASRNAFTPPLLQKKNKRACQKDLRLDTDADEDKERKRFGLRDATNSEIPLPIRFTANSAYELAIAQVLARKFKVPIDNYVPDYGGNRCLGVRRVVVRRPLHDPQACNALVLFQPPNYTEHERMSMDPSKVLVHVVVDPLLSNILRPHQREGVRFMYECVEGKKGDFNGCIMADEMGLGKTLQCVTLVWTLLRQGPESKPTINKAIVVSPSSLVKNWEKEFTKWLQGRLLCLAMEGGTKENTIRVLEQFSMTSSKLGTPVLLISYETFRIYAEILCKYEVGMVICDEGHRLKNSDNLTYQALMGLKTKRRVLLSGTPIQNDLTEYFSLVNFVNPEMLGTAADFKRNFENSILRGQNADSTEGERKKAIEKTQELIGLVDQCIIRRTNQILTKYLPIKFEMVICVKLTAIQLQLYTNFLNSDQVRRSLADCNEKASLTALADITTLKKICSHPDLIHQKIEAKEKGFENSQNVLPSNYKPKEICPEWSGKFMLLDFMLAAIRAAGNDKVVLISNYTQTLDLFEQLARKRKYGFVRLDGTMSIKKRSKVVDKFNDPDSECFLFMLSSKAGGCGLNLIGANRLFMFDPDWNPANDEQAMARVWRDGQKKPCYIYRLVASGTIEEKILQRQTHKKSLSSTIIDNNESSEKHFTRDDLKDLFSFDQKILSDTHEKLKCKRCVQNIQTKPPSESTDCTSHLSQWYHCSNNRGLPDSILAQAWTDSKCVSFVFHHRSQAKEVVESPESAAAEAESVEEESQPTQRKRPSPPLSDDSADEDFIGF</sequence>
<dbReference type="EC" id="3.6.4.-"/>
<dbReference type="EMBL" id="CH902620">
    <property type="protein sequence ID" value="EDV31865.1"/>
    <property type="molecule type" value="Genomic_DNA"/>
</dbReference>
<dbReference type="SMR" id="B3MMA5"/>
<dbReference type="FunCoup" id="B3MMA5">
    <property type="interactions" value="1196"/>
</dbReference>
<dbReference type="STRING" id="7217.B3MMA5"/>
<dbReference type="EnsemblMetazoa" id="FBtr0119036">
    <property type="protein sequence ID" value="FBpp0117528"/>
    <property type="gene ID" value="FBgn0091363"/>
</dbReference>
<dbReference type="EnsemblMetazoa" id="XM_001962608.4">
    <property type="protein sequence ID" value="XP_001962644.1"/>
    <property type="gene ID" value="LOC6497163"/>
</dbReference>
<dbReference type="GeneID" id="6497163"/>
<dbReference type="KEGG" id="dan:6497163"/>
<dbReference type="CTD" id="33507"/>
<dbReference type="eggNOG" id="KOG0390">
    <property type="taxonomic scope" value="Eukaryota"/>
</dbReference>
<dbReference type="HOGENOM" id="CLU_000315_10_5_1"/>
<dbReference type="InParanoid" id="B3MMA5"/>
<dbReference type="OMA" id="YTEHERM"/>
<dbReference type="OrthoDB" id="413460at2759"/>
<dbReference type="PhylomeDB" id="B3MMA5"/>
<dbReference type="ChiTaRS" id="okr">
    <property type="organism name" value="fly"/>
</dbReference>
<dbReference type="Proteomes" id="UP000007801">
    <property type="component" value="Unassembled WGS sequence"/>
</dbReference>
<dbReference type="GO" id="GO:0005634">
    <property type="term" value="C:nucleus"/>
    <property type="evidence" value="ECO:0000250"/>
    <property type="project" value="UniProtKB"/>
</dbReference>
<dbReference type="GO" id="GO:0005524">
    <property type="term" value="F:ATP binding"/>
    <property type="evidence" value="ECO:0007669"/>
    <property type="project" value="UniProtKB-KW"/>
</dbReference>
<dbReference type="GO" id="GO:0016887">
    <property type="term" value="F:ATP hydrolysis activity"/>
    <property type="evidence" value="ECO:0007669"/>
    <property type="project" value="EnsemblMetazoa"/>
</dbReference>
<dbReference type="GO" id="GO:0140658">
    <property type="term" value="F:ATP-dependent chromatin remodeler activity"/>
    <property type="evidence" value="ECO:0007669"/>
    <property type="project" value="EnsemblMetazoa"/>
</dbReference>
<dbReference type="GO" id="GO:0003677">
    <property type="term" value="F:DNA binding"/>
    <property type="evidence" value="ECO:0007669"/>
    <property type="project" value="UniProtKB-KW"/>
</dbReference>
<dbReference type="GO" id="GO:0015616">
    <property type="term" value="F:DNA translocase activity"/>
    <property type="evidence" value="ECO:0007669"/>
    <property type="project" value="TreeGrafter"/>
</dbReference>
<dbReference type="GO" id="GO:0004386">
    <property type="term" value="F:helicase activity"/>
    <property type="evidence" value="ECO:0007669"/>
    <property type="project" value="UniProtKB-KW"/>
</dbReference>
<dbReference type="GO" id="GO:0051301">
    <property type="term" value="P:cell division"/>
    <property type="evidence" value="ECO:0007669"/>
    <property type="project" value="UniProtKB-KW"/>
</dbReference>
<dbReference type="GO" id="GO:0006338">
    <property type="term" value="P:chromatin remodeling"/>
    <property type="evidence" value="ECO:0000250"/>
    <property type="project" value="UniProtKB"/>
</dbReference>
<dbReference type="GO" id="GO:0043150">
    <property type="term" value="P:DNA synthesis involved in double-strand break repair via homologous recombination"/>
    <property type="evidence" value="ECO:0000250"/>
    <property type="project" value="UniProtKB"/>
</dbReference>
<dbReference type="GO" id="GO:0000724">
    <property type="term" value="P:double-strand break repair via homologous recombination"/>
    <property type="evidence" value="ECO:0000250"/>
    <property type="project" value="UniProtKB"/>
</dbReference>
<dbReference type="GO" id="GO:0045003">
    <property type="term" value="P:double-strand break repair via synthesis-dependent strand annealing"/>
    <property type="evidence" value="ECO:0007669"/>
    <property type="project" value="EnsemblMetazoa"/>
</dbReference>
<dbReference type="GO" id="GO:0000711">
    <property type="term" value="P:meiotic DNA repair synthesis"/>
    <property type="evidence" value="ECO:0000250"/>
    <property type="project" value="UniProtKB"/>
</dbReference>
<dbReference type="GO" id="GO:0030716">
    <property type="term" value="P:oocyte fate determination"/>
    <property type="evidence" value="ECO:0007669"/>
    <property type="project" value="EnsemblMetazoa"/>
</dbReference>
<dbReference type="GO" id="GO:0048477">
    <property type="term" value="P:oogenesis"/>
    <property type="evidence" value="ECO:0007669"/>
    <property type="project" value="EnsemblMetazoa"/>
</dbReference>
<dbReference type="GO" id="GO:0007131">
    <property type="term" value="P:reciprocal meiotic recombination"/>
    <property type="evidence" value="ECO:0007669"/>
    <property type="project" value="EnsemblMetazoa"/>
</dbReference>
<dbReference type="GO" id="GO:0010212">
    <property type="term" value="P:response to ionizing radiation"/>
    <property type="evidence" value="ECO:0000250"/>
    <property type="project" value="UniProtKB"/>
</dbReference>
<dbReference type="CDD" id="cd18067">
    <property type="entry name" value="DEXHc_RAD54A"/>
    <property type="match status" value="1"/>
</dbReference>
<dbReference type="CDD" id="cd18793">
    <property type="entry name" value="SF2_C_SNF"/>
    <property type="match status" value="1"/>
</dbReference>
<dbReference type="FunFam" id="3.40.50.10810:FF:000010">
    <property type="entry name" value="DNA repair and recombination protein RAD54-like"/>
    <property type="match status" value="1"/>
</dbReference>
<dbReference type="FunFam" id="3.40.50.300:FF:000332">
    <property type="entry name" value="DNA repair and recombination protein RAD54-like"/>
    <property type="match status" value="1"/>
</dbReference>
<dbReference type="Gene3D" id="3.40.50.300">
    <property type="entry name" value="P-loop containing nucleotide triphosphate hydrolases"/>
    <property type="match status" value="1"/>
</dbReference>
<dbReference type="Gene3D" id="1.20.120.850">
    <property type="entry name" value="SWI2/SNF2 ATPases, N-terminal domain"/>
    <property type="match status" value="1"/>
</dbReference>
<dbReference type="Gene3D" id="3.40.50.10810">
    <property type="entry name" value="Tandem AAA-ATPase domain"/>
    <property type="match status" value="1"/>
</dbReference>
<dbReference type="InterPro" id="IPR014001">
    <property type="entry name" value="Helicase_ATP-bd"/>
</dbReference>
<dbReference type="InterPro" id="IPR001650">
    <property type="entry name" value="Helicase_C-like"/>
</dbReference>
<dbReference type="InterPro" id="IPR027417">
    <property type="entry name" value="P-loop_NTPase"/>
</dbReference>
<dbReference type="InterPro" id="IPR038718">
    <property type="entry name" value="SNF2-like_sf"/>
</dbReference>
<dbReference type="InterPro" id="IPR049730">
    <property type="entry name" value="SNF2/RAD54-like_C"/>
</dbReference>
<dbReference type="InterPro" id="IPR000330">
    <property type="entry name" value="SNF2_N"/>
</dbReference>
<dbReference type="InterPro" id="IPR050496">
    <property type="entry name" value="SNF2_RAD54_helicase_repair"/>
</dbReference>
<dbReference type="PANTHER" id="PTHR45629:SF7">
    <property type="entry name" value="DNA EXCISION REPAIR PROTEIN ERCC-6-RELATED"/>
    <property type="match status" value="1"/>
</dbReference>
<dbReference type="PANTHER" id="PTHR45629">
    <property type="entry name" value="SNF2/RAD54 FAMILY MEMBER"/>
    <property type="match status" value="1"/>
</dbReference>
<dbReference type="Pfam" id="PF00271">
    <property type="entry name" value="Helicase_C"/>
    <property type="match status" value="1"/>
</dbReference>
<dbReference type="Pfam" id="PF00176">
    <property type="entry name" value="SNF2-rel_dom"/>
    <property type="match status" value="1"/>
</dbReference>
<dbReference type="SMART" id="SM00487">
    <property type="entry name" value="DEXDc"/>
    <property type="match status" value="1"/>
</dbReference>
<dbReference type="SMART" id="SM00490">
    <property type="entry name" value="HELICc"/>
    <property type="match status" value="1"/>
</dbReference>
<dbReference type="SUPFAM" id="SSF52540">
    <property type="entry name" value="P-loop containing nucleoside triphosphate hydrolases"/>
    <property type="match status" value="2"/>
</dbReference>
<dbReference type="PROSITE" id="PS51192">
    <property type="entry name" value="HELICASE_ATP_BIND_1"/>
    <property type="match status" value="1"/>
</dbReference>
<dbReference type="PROSITE" id="PS51194">
    <property type="entry name" value="HELICASE_CTER"/>
    <property type="match status" value="1"/>
</dbReference>
<comment type="function">
    <text evidence="2">Involved in mitotic DNA repair and meiotic recombination. Functions in the recombinational DNA repair pathway. Essential for interhomolog gene conversion (GC), but may have a less important role in intersister GC than spn-A/Rad51. In the presence of DNA, spn-A/Rad51 enhances the ATPase activity of okr/Rad54 (By similarity).</text>
</comment>
<comment type="subunit">
    <text evidence="1">Interacts (via N-terminus) with spn-A/Rad51.</text>
</comment>
<comment type="subcellular location">
    <subcellularLocation>
        <location evidence="2">Nucleus</location>
    </subcellularLocation>
</comment>
<comment type="similarity">
    <text evidence="3">Belongs to the SNF2/RAD54 helicase family.</text>
</comment>